<comment type="function">
    <text evidence="1">Involved in unsaturated fatty acids biosynthesis. Catalyzes the dehydration of short chain beta-hydroxyacyl-ACPs and long chain saturated and unsaturated beta-hydroxyacyl-ACPs.</text>
</comment>
<comment type="catalytic activity">
    <reaction evidence="1">
        <text>a (3R)-hydroxyacyl-[ACP] = a (2E)-enoyl-[ACP] + H2O</text>
        <dbReference type="Rhea" id="RHEA:13097"/>
        <dbReference type="Rhea" id="RHEA-COMP:9925"/>
        <dbReference type="Rhea" id="RHEA-COMP:9945"/>
        <dbReference type="ChEBI" id="CHEBI:15377"/>
        <dbReference type="ChEBI" id="CHEBI:78784"/>
        <dbReference type="ChEBI" id="CHEBI:78827"/>
        <dbReference type="EC" id="4.2.1.59"/>
    </reaction>
</comment>
<comment type="subcellular location">
    <subcellularLocation>
        <location evidence="1">Cytoplasm</location>
    </subcellularLocation>
</comment>
<comment type="similarity">
    <text evidence="1">Belongs to the thioester dehydratase family. FabZ subfamily.</text>
</comment>
<evidence type="ECO:0000255" key="1">
    <source>
        <dbReference type="HAMAP-Rule" id="MF_00406"/>
    </source>
</evidence>
<sequence>MTTNTHTLQIEEILELLPHRFPFLLVDRVLDFEEGRFLRAVKNVSVNEPFFQGHFPGKPILPGVLILEAMAQATGILAFKSVGKLEPGELYYFAGIDEARFKRPVVPGDQMIMEVTFEKTRRGLTRFKGVALVDGKVVCEATMMCARSREA</sequence>
<feature type="chain" id="PRO_0000091724" description="3-hydroxyacyl-[acyl-carrier-protein] dehydratase FabZ">
    <location>
        <begin position="1"/>
        <end position="151"/>
    </location>
</feature>
<feature type="active site" evidence="1">
    <location>
        <position position="54"/>
    </location>
</feature>
<organism>
    <name type="scientific">Salmonella paratyphi A (strain ATCC 9150 / SARB42)</name>
    <dbReference type="NCBI Taxonomy" id="295319"/>
    <lineage>
        <taxon>Bacteria</taxon>
        <taxon>Pseudomonadati</taxon>
        <taxon>Pseudomonadota</taxon>
        <taxon>Gammaproteobacteria</taxon>
        <taxon>Enterobacterales</taxon>
        <taxon>Enterobacteriaceae</taxon>
        <taxon>Salmonella</taxon>
    </lineage>
</organism>
<name>FABZ_SALPA</name>
<proteinExistence type="inferred from homology"/>
<reference key="1">
    <citation type="journal article" date="2004" name="Nat. Genet.">
        <title>Comparison of genome degradation in Paratyphi A and Typhi, human-restricted serovars of Salmonella enterica that cause typhoid.</title>
        <authorList>
            <person name="McClelland M."/>
            <person name="Sanderson K.E."/>
            <person name="Clifton S.W."/>
            <person name="Latreille P."/>
            <person name="Porwollik S."/>
            <person name="Sabo A."/>
            <person name="Meyer R."/>
            <person name="Bieri T."/>
            <person name="Ozersky P."/>
            <person name="McLellan M."/>
            <person name="Harkins C.R."/>
            <person name="Wang C."/>
            <person name="Nguyen C."/>
            <person name="Berghoff A."/>
            <person name="Elliott G."/>
            <person name="Kohlberg S."/>
            <person name="Strong C."/>
            <person name="Du F."/>
            <person name="Carter J."/>
            <person name="Kremizki C."/>
            <person name="Layman D."/>
            <person name="Leonard S."/>
            <person name="Sun H."/>
            <person name="Fulton L."/>
            <person name="Nash W."/>
            <person name="Miner T."/>
            <person name="Minx P."/>
            <person name="Delehaunty K."/>
            <person name="Fronick C."/>
            <person name="Magrini V."/>
            <person name="Nhan M."/>
            <person name="Warren W."/>
            <person name="Florea L."/>
            <person name="Spieth J."/>
            <person name="Wilson R.K."/>
        </authorList>
    </citation>
    <scope>NUCLEOTIDE SEQUENCE [LARGE SCALE GENOMIC DNA]</scope>
    <source>
        <strain>ATCC 9150 / SARB42</strain>
    </source>
</reference>
<dbReference type="EC" id="4.2.1.59" evidence="1"/>
<dbReference type="EMBL" id="CP000026">
    <property type="protein sequence ID" value="AAV76263.1"/>
    <property type="molecule type" value="Genomic_DNA"/>
</dbReference>
<dbReference type="RefSeq" id="WP_000210741.1">
    <property type="nucleotide sequence ID" value="NC_006511.1"/>
</dbReference>
<dbReference type="SMR" id="Q5PD74"/>
<dbReference type="GeneID" id="66754751"/>
<dbReference type="KEGG" id="spt:SPA0234"/>
<dbReference type="HOGENOM" id="CLU_078912_1_0_6"/>
<dbReference type="Proteomes" id="UP000008185">
    <property type="component" value="Chromosome"/>
</dbReference>
<dbReference type="GO" id="GO:0005737">
    <property type="term" value="C:cytoplasm"/>
    <property type="evidence" value="ECO:0007669"/>
    <property type="project" value="UniProtKB-SubCell"/>
</dbReference>
<dbReference type="GO" id="GO:0016020">
    <property type="term" value="C:membrane"/>
    <property type="evidence" value="ECO:0007669"/>
    <property type="project" value="GOC"/>
</dbReference>
<dbReference type="GO" id="GO:0019171">
    <property type="term" value="F:(3R)-hydroxyacyl-[acyl-carrier-protein] dehydratase activity"/>
    <property type="evidence" value="ECO:0007669"/>
    <property type="project" value="UniProtKB-EC"/>
</dbReference>
<dbReference type="GO" id="GO:0006633">
    <property type="term" value="P:fatty acid biosynthetic process"/>
    <property type="evidence" value="ECO:0007669"/>
    <property type="project" value="UniProtKB-UniRule"/>
</dbReference>
<dbReference type="GO" id="GO:0009245">
    <property type="term" value="P:lipid A biosynthetic process"/>
    <property type="evidence" value="ECO:0007669"/>
    <property type="project" value="UniProtKB-UniRule"/>
</dbReference>
<dbReference type="CDD" id="cd01288">
    <property type="entry name" value="FabZ"/>
    <property type="match status" value="1"/>
</dbReference>
<dbReference type="FunFam" id="3.10.129.10:FF:000001">
    <property type="entry name" value="3-hydroxyacyl-[acyl-carrier-protein] dehydratase FabZ"/>
    <property type="match status" value="1"/>
</dbReference>
<dbReference type="Gene3D" id="3.10.129.10">
    <property type="entry name" value="Hotdog Thioesterase"/>
    <property type="match status" value="1"/>
</dbReference>
<dbReference type="HAMAP" id="MF_00406">
    <property type="entry name" value="FabZ"/>
    <property type="match status" value="1"/>
</dbReference>
<dbReference type="InterPro" id="IPR013114">
    <property type="entry name" value="FabA_FabZ"/>
</dbReference>
<dbReference type="InterPro" id="IPR010084">
    <property type="entry name" value="FabZ"/>
</dbReference>
<dbReference type="InterPro" id="IPR029069">
    <property type="entry name" value="HotDog_dom_sf"/>
</dbReference>
<dbReference type="NCBIfam" id="TIGR01750">
    <property type="entry name" value="fabZ"/>
    <property type="match status" value="1"/>
</dbReference>
<dbReference type="NCBIfam" id="NF000582">
    <property type="entry name" value="PRK00006.1"/>
    <property type="match status" value="1"/>
</dbReference>
<dbReference type="PANTHER" id="PTHR30272">
    <property type="entry name" value="3-HYDROXYACYL-[ACYL-CARRIER-PROTEIN] DEHYDRATASE"/>
    <property type="match status" value="1"/>
</dbReference>
<dbReference type="PANTHER" id="PTHR30272:SF1">
    <property type="entry name" value="3-HYDROXYACYL-[ACYL-CARRIER-PROTEIN] DEHYDRATASE"/>
    <property type="match status" value="1"/>
</dbReference>
<dbReference type="Pfam" id="PF07977">
    <property type="entry name" value="FabA"/>
    <property type="match status" value="1"/>
</dbReference>
<dbReference type="SUPFAM" id="SSF54637">
    <property type="entry name" value="Thioesterase/thiol ester dehydrase-isomerase"/>
    <property type="match status" value="1"/>
</dbReference>
<protein>
    <recommendedName>
        <fullName evidence="1">3-hydroxyacyl-[acyl-carrier-protein] dehydratase FabZ</fullName>
        <ecNumber evidence="1">4.2.1.59</ecNumber>
    </recommendedName>
    <alternativeName>
        <fullName evidence="1">(3R)-hydroxymyristoyl-[acyl-carrier-protein] dehydratase</fullName>
        <shortName evidence="1">(3R)-hydroxymyristoyl-ACP dehydrase</shortName>
    </alternativeName>
    <alternativeName>
        <fullName evidence="1">Beta-hydroxyacyl-ACP dehydratase</fullName>
    </alternativeName>
</protein>
<keyword id="KW-0963">Cytoplasm</keyword>
<keyword id="KW-0441">Lipid A biosynthesis</keyword>
<keyword id="KW-0444">Lipid biosynthesis</keyword>
<keyword id="KW-0443">Lipid metabolism</keyword>
<keyword id="KW-0456">Lyase</keyword>
<gene>
    <name evidence="1" type="primary">fabZ</name>
    <name type="ordered locus">SPA0234</name>
</gene>
<accession>Q5PD74</accession>